<protein>
    <recommendedName>
        <fullName evidence="1">Elongation factor P-like protein</fullName>
    </recommendedName>
</protein>
<dbReference type="EMBL" id="AL513382">
    <property type="status" value="NOT_ANNOTATED_CDS"/>
    <property type="molecule type" value="Genomic_DNA"/>
</dbReference>
<dbReference type="EMBL" id="AE014613">
    <property type="protein sequence ID" value="AAO68345.1"/>
    <property type="molecule type" value="Genomic_DNA"/>
</dbReference>
<dbReference type="RefSeq" id="WP_001136822.1">
    <property type="nucleotide sequence ID" value="NZ_WSUR01000002.1"/>
</dbReference>
<dbReference type="SMR" id="P64047"/>
<dbReference type="GeneID" id="66756682"/>
<dbReference type="KEGG" id="stt:t0644"/>
<dbReference type="PATRIC" id="fig|90370.929.peg.4787"/>
<dbReference type="HOGENOM" id="CLU_074944_2_0_6"/>
<dbReference type="OMA" id="SNHHKPG"/>
<dbReference type="OrthoDB" id="5599402at2"/>
<dbReference type="Proteomes" id="UP000000541">
    <property type="component" value="Chromosome"/>
</dbReference>
<dbReference type="Proteomes" id="UP000002670">
    <property type="component" value="Chromosome"/>
</dbReference>
<dbReference type="GO" id="GO:0005829">
    <property type="term" value="C:cytosol"/>
    <property type="evidence" value="ECO:0007669"/>
    <property type="project" value="UniProtKB-ARBA"/>
</dbReference>
<dbReference type="GO" id="GO:0003746">
    <property type="term" value="F:translation elongation factor activity"/>
    <property type="evidence" value="ECO:0007669"/>
    <property type="project" value="UniProtKB-UniRule"/>
</dbReference>
<dbReference type="GO" id="GO:0043043">
    <property type="term" value="P:peptide biosynthetic process"/>
    <property type="evidence" value="ECO:0007669"/>
    <property type="project" value="InterPro"/>
</dbReference>
<dbReference type="CDD" id="cd04470">
    <property type="entry name" value="S1_EF-P_repeat_1"/>
    <property type="match status" value="1"/>
</dbReference>
<dbReference type="CDD" id="cd05794">
    <property type="entry name" value="S1_EF-P_repeat_2"/>
    <property type="match status" value="1"/>
</dbReference>
<dbReference type="FunFam" id="2.40.50.140:FF:000004">
    <property type="entry name" value="Elongation factor P"/>
    <property type="match status" value="1"/>
</dbReference>
<dbReference type="FunFam" id="2.30.30.30:FF:000011">
    <property type="entry name" value="Elongation factor P-like protein"/>
    <property type="match status" value="1"/>
</dbReference>
<dbReference type="FunFam" id="2.40.50.140:FF:000053">
    <property type="entry name" value="Elongation factor P-like protein"/>
    <property type="match status" value="1"/>
</dbReference>
<dbReference type="Gene3D" id="2.30.30.30">
    <property type="match status" value="1"/>
</dbReference>
<dbReference type="Gene3D" id="2.40.50.140">
    <property type="entry name" value="Nucleic acid-binding proteins"/>
    <property type="match status" value="2"/>
</dbReference>
<dbReference type="HAMAP" id="MF_00646">
    <property type="entry name" value="EFP"/>
    <property type="match status" value="1"/>
</dbReference>
<dbReference type="InterPro" id="IPR015365">
    <property type="entry name" value="Elong-fact-P_C"/>
</dbReference>
<dbReference type="InterPro" id="IPR012340">
    <property type="entry name" value="NA-bd_OB-fold"/>
</dbReference>
<dbReference type="InterPro" id="IPR014722">
    <property type="entry name" value="Rib_uL2_dom2"/>
</dbReference>
<dbReference type="InterPro" id="IPR020599">
    <property type="entry name" value="Transl_elong_fac_P/YeiP"/>
</dbReference>
<dbReference type="InterPro" id="IPR013185">
    <property type="entry name" value="Transl_elong_KOW-like"/>
</dbReference>
<dbReference type="InterPro" id="IPR011897">
    <property type="entry name" value="Transl_elong_p-like_YeiP"/>
</dbReference>
<dbReference type="InterPro" id="IPR001059">
    <property type="entry name" value="Transl_elong_P/YeiP_cen"/>
</dbReference>
<dbReference type="InterPro" id="IPR013852">
    <property type="entry name" value="Transl_elong_P/YeiP_CS"/>
</dbReference>
<dbReference type="InterPro" id="IPR008991">
    <property type="entry name" value="Translation_prot_SH3-like_sf"/>
</dbReference>
<dbReference type="NCBIfam" id="NF001810">
    <property type="entry name" value="PRK00529.1"/>
    <property type="match status" value="1"/>
</dbReference>
<dbReference type="NCBIfam" id="NF003392">
    <property type="entry name" value="PRK04542.1"/>
    <property type="match status" value="1"/>
</dbReference>
<dbReference type="NCBIfam" id="TIGR02178">
    <property type="entry name" value="yeiP"/>
    <property type="match status" value="1"/>
</dbReference>
<dbReference type="PANTHER" id="PTHR30053">
    <property type="entry name" value="ELONGATION FACTOR P"/>
    <property type="match status" value="1"/>
</dbReference>
<dbReference type="PANTHER" id="PTHR30053:SF14">
    <property type="entry name" value="TRANSLATION ELONGATION FACTOR KOW-LIKE DOMAIN-CONTAINING PROTEIN"/>
    <property type="match status" value="1"/>
</dbReference>
<dbReference type="Pfam" id="PF01132">
    <property type="entry name" value="EFP"/>
    <property type="match status" value="1"/>
</dbReference>
<dbReference type="Pfam" id="PF08207">
    <property type="entry name" value="EFP_N"/>
    <property type="match status" value="1"/>
</dbReference>
<dbReference type="Pfam" id="PF09285">
    <property type="entry name" value="Elong-fact-P_C"/>
    <property type="match status" value="1"/>
</dbReference>
<dbReference type="PIRSF" id="PIRSF005901">
    <property type="entry name" value="EF-P"/>
    <property type="match status" value="1"/>
</dbReference>
<dbReference type="SMART" id="SM01185">
    <property type="entry name" value="EFP"/>
    <property type="match status" value="1"/>
</dbReference>
<dbReference type="SMART" id="SM00841">
    <property type="entry name" value="Elong-fact-P_C"/>
    <property type="match status" value="1"/>
</dbReference>
<dbReference type="SUPFAM" id="SSF50249">
    <property type="entry name" value="Nucleic acid-binding proteins"/>
    <property type="match status" value="2"/>
</dbReference>
<dbReference type="SUPFAM" id="SSF50104">
    <property type="entry name" value="Translation proteins SH3-like domain"/>
    <property type="match status" value="1"/>
</dbReference>
<dbReference type="PROSITE" id="PS01275">
    <property type="entry name" value="EFP"/>
    <property type="match status" value="1"/>
</dbReference>
<reference key="1">
    <citation type="journal article" date="2001" name="Nature">
        <title>Complete genome sequence of a multiple drug resistant Salmonella enterica serovar Typhi CT18.</title>
        <authorList>
            <person name="Parkhill J."/>
            <person name="Dougan G."/>
            <person name="James K.D."/>
            <person name="Thomson N.R."/>
            <person name="Pickard D."/>
            <person name="Wain J."/>
            <person name="Churcher C.M."/>
            <person name="Mungall K.L."/>
            <person name="Bentley S.D."/>
            <person name="Holden M.T.G."/>
            <person name="Sebaihia M."/>
            <person name="Baker S."/>
            <person name="Basham D."/>
            <person name="Brooks K."/>
            <person name="Chillingworth T."/>
            <person name="Connerton P."/>
            <person name="Cronin A."/>
            <person name="Davis P."/>
            <person name="Davies R.M."/>
            <person name="Dowd L."/>
            <person name="White N."/>
            <person name="Farrar J."/>
            <person name="Feltwell T."/>
            <person name="Hamlin N."/>
            <person name="Haque A."/>
            <person name="Hien T.T."/>
            <person name="Holroyd S."/>
            <person name="Jagels K."/>
            <person name="Krogh A."/>
            <person name="Larsen T.S."/>
            <person name="Leather S."/>
            <person name="Moule S."/>
            <person name="O'Gaora P."/>
            <person name="Parry C."/>
            <person name="Quail M.A."/>
            <person name="Rutherford K.M."/>
            <person name="Simmonds M."/>
            <person name="Skelton J."/>
            <person name="Stevens K."/>
            <person name="Whitehead S."/>
            <person name="Barrell B.G."/>
        </authorList>
    </citation>
    <scope>NUCLEOTIDE SEQUENCE [LARGE SCALE GENOMIC DNA]</scope>
    <source>
        <strain>CT18</strain>
    </source>
</reference>
<reference key="2">
    <citation type="journal article" date="2003" name="J. Bacteriol.">
        <title>Comparative genomics of Salmonella enterica serovar Typhi strains Ty2 and CT18.</title>
        <authorList>
            <person name="Deng W."/>
            <person name="Liou S.-R."/>
            <person name="Plunkett G. III"/>
            <person name="Mayhew G.F."/>
            <person name="Rose D.J."/>
            <person name="Burland V."/>
            <person name="Kodoyianni V."/>
            <person name="Schwartz D.C."/>
            <person name="Blattner F.R."/>
        </authorList>
    </citation>
    <scope>NUCLEOTIDE SEQUENCE [LARGE SCALE GENOMIC DNA]</scope>
    <source>
        <strain>ATCC 700931 / Ty2</strain>
    </source>
</reference>
<feature type="chain" id="PRO_0000094386" description="Elongation factor P-like protein">
    <location>
        <begin position="1"/>
        <end position="190"/>
    </location>
</feature>
<accession>P64047</accession>
<accession>Q8ZNK3</accession>
<name>EFPL_SALTI</name>
<evidence type="ECO:0000255" key="1">
    <source>
        <dbReference type="HAMAP-Rule" id="MF_00646"/>
    </source>
</evidence>
<gene>
    <name evidence="1" type="primary">yeiP</name>
    <name type="ordered locus">STY2447</name>
    <name type="ordered locus">t0644</name>
</gene>
<sequence length="190" mass="21386">MPRANEIKKGMVLNYNGKLLIVKDIDIQSPTARGAATLYKMRFSDVRTGLKVEERFKGDDIVDTVTLSRRGVDFSYVDGNEYVFMDKEDYTPYTFTKDQIEEELLFMPEGGMPDMQVLTWDGQLLALELPQTVDLEIVETAPGIKGASASARNKPATLSTGLVIQVPEYLSAGEKIRIHIEERRYMGRAD</sequence>
<proteinExistence type="inferred from homology"/>
<organism>
    <name type="scientific">Salmonella typhi</name>
    <dbReference type="NCBI Taxonomy" id="90370"/>
    <lineage>
        <taxon>Bacteria</taxon>
        <taxon>Pseudomonadati</taxon>
        <taxon>Pseudomonadota</taxon>
        <taxon>Gammaproteobacteria</taxon>
        <taxon>Enterobacterales</taxon>
        <taxon>Enterobacteriaceae</taxon>
        <taxon>Salmonella</taxon>
    </lineage>
</organism>
<comment type="similarity">
    <text evidence="1">Belongs to the elongation factor P family.</text>
</comment>